<sequence>MAAPPAPQPPSLLGYHRVLSPLAGIRVSPLCLGTMHFGGQWTRAMGDVTKETAFALLDRFYEAGGNFIDTANFYQGEGSEKWLGEWVASRGNRDELVLATKYTMSYRLTGPEKIKSNFQGSHSKSLRLSVEASLAKLRTDYIDLLYVHMWDFSTSVEEVMQSLHHLVAAGKVLNIGISDAPAWVVAKCNEYARFHGLTRFCVYQGRWACSYRDFEREILPMCQSEGLALAPWGALGRGQYKSAEEFQQEGTRNMGPQEEKHRLMGAKLTEVGERKGVAAAAIALAYLLHKSPYVFPVIGCRTVEQLEANITSLGVELSDEEIYEIEDTIPFDVGFPMAFLFESPQQKYRSDMTTRHIWQVTCNARIESVPKPRPIEPKQGYKQMDRK</sequence>
<feature type="chain" id="PRO_0000070385" description="Norsolorinic acid reductase stcV">
    <location>
        <begin position="1"/>
        <end position="387"/>
    </location>
</feature>
<feature type="active site" description="Proton donor" evidence="4">
    <location>
        <position position="74"/>
    </location>
</feature>
<feature type="binding site" evidence="1">
    <location>
        <position position="69"/>
    </location>
    <ligand>
        <name>NADP(+)</name>
        <dbReference type="ChEBI" id="CHEBI:58349"/>
    </ligand>
</feature>
<feature type="binding site" evidence="4">
    <location>
        <position position="148"/>
    </location>
    <ligand>
        <name>substrate</name>
    </ligand>
</feature>
<feature type="binding site" evidence="1">
    <location>
        <begin position="178"/>
        <end position="179"/>
    </location>
    <ligand>
        <name>NADP(+)</name>
        <dbReference type="ChEBI" id="CHEBI:58349"/>
    </ligand>
</feature>
<feature type="binding site" evidence="1">
    <location>
        <position position="204"/>
    </location>
    <ligand>
        <name>NADP(+)</name>
        <dbReference type="ChEBI" id="CHEBI:58349"/>
    </ligand>
</feature>
<feature type="binding site" evidence="1">
    <location>
        <begin position="233"/>
        <end position="243"/>
    </location>
    <ligand>
        <name>NADP(+)</name>
        <dbReference type="ChEBI" id="CHEBI:58349"/>
    </ligand>
</feature>
<feature type="binding site" evidence="1">
    <location>
        <begin position="301"/>
        <end position="309"/>
    </location>
    <ligand>
        <name>NADP(+)</name>
        <dbReference type="ChEBI" id="CHEBI:58349"/>
    </ligand>
</feature>
<feature type="sequence conflict" description="In Ref. 1; AAC49206." evidence="15" ref="1">
    <original>T</original>
    <variation>M</variation>
    <location>
        <position position="42"/>
    </location>
</feature>
<reference key="1">
    <citation type="journal article" date="1996" name="Proc. Natl. Acad. Sci. U.S.A.">
        <title>Twenty-five coregulated transcripts define a sterigmatocystin gene cluster in Aspergillus nidulans.</title>
        <authorList>
            <person name="Brown D.W."/>
            <person name="Yu J.-H."/>
            <person name="Kelkar H.S."/>
            <person name="Fernandes M."/>
            <person name="Nesbitt T.C."/>
            <person name="Keller N.P."/>
            <person name="Adams T.H."/>
            <person name="Leonard T.J."/>
        </authorList>
    </citation>
    <scope>NUCLEOTIDE SEQUENCE [GENOMIC DNA]</scope>
    <scope>INDUCTION</scope>
    <scope>FUNCTION</scope>
    <scope>PATHWAY</scope>
    <source>
        <strain>FGSC 26</strain>
    </source>
</reference>
<reference key="2">
    <citation type="journal article" date="2005" name="Nature">
        <title>Sequencing of Aspergillus nidulans and comparative analysis with A. fumigatus and A. oryzae.</title>
        <authorList>
            <person name="Galagan J.E."/>
            <person name="Calvo S.E."/>
            <person name="Cuomo C."/>
            <person name="Ma L.-J."/>
            <person name="Wortman J.R."/>
            <person name="Batzoglou S."/>
            <person name="Lee S.-I."/>
            <person name="Bastuerkmen M."/>
            <person name="Spevak C.C."/>
            <person name="Clutterbuck J."/>
            <person name="Kapitonov V."/>
            <person name="Jurka J."/>
            <person name="Scazzocchio C."/>
            <person name="Farman M.L."/>
            <person name="Butler J."/>
            <person name="Purcell S."/>
            <person name="Harris S."/>
            <person name="Braus G.H."/>
            <person name="Draht O."/>
            <person name="Busch S."/>
            <person name="D'Enfert C."/>
            <person name="Bouchier C."/>
            <person name="Goldman G.H."/>
            <person name="Bell-Pedersen D."/>
            <person name="Griffiths-Jones S."/>
            <person name="Doonan J.H."/>
            <person name="Yu J."/>
            <person name="Vienken K."/>
            <person name="Pain A."/>
            <person name="Freitag M."/>
            <person name="Selker E.U."/>
            <person name="Archer D.B."/>
            <person name="Penalva M.A."/>
            <person name="Oakley B.R."/>
            <person name="Momany M."/>
            <person name="Tanaka T."/>
            <person name="Kumagai T."/>
            <person name="Asai K."/>
            <person name="Machida M."/>
            <person name="Nierman W.C."/>
            <person name="Denning D.W."/>
            <person name="Caddick M.X."/>
            <person name="Hynes M."/>
            <person name="Paoletti M."/>
            <person name="Fischer R."/>
            <person name="Miller B.L."/>
            <person name="Dyer P.S."/>
            <person name="Sachs M.S."/>
            <person name="Osmani S.A."/>
            <person name="Birren B.W."/>
        </authorList>
    </citation>
    <scope>NUCLEOTIDE SEQUENCE [LARGE SCALE GENOMIC DNA]</scope>
    <source>
        <strain>FGSC A4 / ATCC 38163 / CBS 112.46 / NRRL 194 / M139</strain>
    </source>
</reference>
<reference key="3">
    <citation type="journal article" date="2009" name="Fungal Genet. Biol.">
        <title>The 2008 update of the Aspergillus nidulans genome annotation: a community effort.</title>
        <authorList>
            <person name="Wortman J.R."/>
            <person name="Gilsenan J.M."/>
            <person name="Joardar V."/>
            <person name="Deegan J."/>
            <person name="Clutterbuck J."/>
            <person name="Andersen M.R."/>
            <person name="Archer D."/>
            <person name="Bencina M."/>
            <person name="Braus G."/>
            <person name="Coutinho P."/>
            <person name="von Dohren H."/>
            <person name="Doonan J."/>
            <person name="Driessen A.J."/>
            <person name="Durek P."/>
            <person name="Espeso E."/>
            <person name="Fekete E."/>
            <person name="Flipphi M."/>
            <person name="Estrada C.G."/>
            <person name="Geysens S."/>
            <person name="Goldman G."/>
            <person name="de Groot P.W."/>
            <person name="Hansen K."/>
            <person name="Harris S.D."/>
            <person name="Heinekamp T."/>
            <person name="Helmstaedt K."/>
            <person name="Henrissat B."/>
            <person name="Hofmann G."/>
            <person name="Homan T."/>
            <person name="Horio T."/>
            <person name="Horiuchi H."/>
            <person name="James S."/>
            <person name="Jones M."/>
            <person name="Karaffa L."/>
            <person name="Karanyi Z."/>
            <person name="Kato M."/>
            <person name="Keller N."/>
            <person name="Kelly D.E."/>
            <person name="Kiel J.A."/>
            <person name="Kim J.M."/>
            <person name="van der Klei I.J."/>
            <person name="Klis F.M."/>
            <person name="Kovalchuk A."/>
            <person name="Krasevec N."/>
            <person name="Kubicek C.P."/>
            <person name="Liu B."/>
            <person name="Maccabe A."/>
            <person name="Meyer V."/>
            <person name="Mirabito P."/>
            <person name="Miskei M."/>
            <person name="Mos M."/>
            <person name="Mullins J."/>
            <person name="Nelson D.R."/>
            <person name="Nielsen J."/>
            <person name="Oakley B.R."/>
            <person name="Osmani S.A."/>
            <person name="Pakula T."/>
            <person name="Paszewski A."/>
            <person name="Paulsen I."/>
            <person name="Pilsyk S."/>
            <person name="Pocsi I."/>
            <person name="Punt P.J."/>
            <person name="Ram A.F."/>
            <person name="Ren Q."/>
            <person name="Robellet X."/>
            <person name="Robson G."/>
            <person name="Seiboth B."/>
            <person name="van Solingen P."/>
            <person name="Specht T."/>
            <person name="Sun J."/>
            <person name="Taheri-Talesh N."/>
            <person name="Takeshita N."/>
            <person name="Ussery D."/>
            <person name="vanKuyk P.A."/>
            <person name="Visser H."/>
            <person name="van de Vondervoort P.J."/>
            <person name="de Vries R.P."/>
            <person name="Walton J."/>
            <person name="Xiang X."/>
            <person name="Xiong Y."/>
            <person name="Zeng A.P."/>
            <person name="Brandt B.W."/>
            <person name="Cornell M.J."/>
            <person name="van den Hondel C.A."/>
            <person name="Visser J."/>
            <person name="Oliver S.G."/>
            <person name="Turner G."/>
        </authorList>
    </citation>
    <scope>GENOME REANNOTATION</scope>
    <source>
        <strain>FGSC A4 / ATCC 38163 / CBS 112.46 / NRRL 194 / M139</strain>
    </source>
</reference>
<reference key="4">
    <citation type="journal article" date="1994" name="Appl. Environ. Microbiol.">
        <title>Aspergillus nidulans verA is required for production of the mycotoxin sterigmatocystin.</title>
        <authorList>
            <person name="Keller N.P."/>
            <person name="Kantz N.J."/>
            <person name="Adams T.H."/>
        </authorList>
    </citation>
    <scope>FUNCTION</scope>
    <scope>INDUCTION</scope>
</reference>
<reference key="5">
    <citation type="journal article" date="1995" name="Appl. Environ. Microbiol.">
        <title>StcS, a putative P-450 monooxygenase, is required for the conversion of versicolorin A to sterigmatocystin in Aspergillus nidulans.</title>
        <authorList>
            <person name="Keller N.P."/>
            <person name="Segner S."/>
            <person name="Bhatnagar D."/>
            <person name="Adams T.H."/>
        </authorList>
    </citation>
    <scope>FUNCTION</scope>
</reference>
<reference key="6">
    <citation type="journal article" date="1995" name="J. Bacteriol.">
        <title>Sterigmatocystin biosynthesis in Aspergillus nidulans requires a novel type I polyketide synthase.</title>
        <authorList>
            <person name="Yu J.-H."/>
            <person name="Leonard T.J."/>
        </authorList>
    </citation>
    <scope>FUNCTION</scope>
    <source>
        <strain>FGSC A4 / ATCC 38163 / CBS 112.46 / NRRL 194 / M139</strain>
    </source>
</reference>
<reference key="7">
    <citation type="journal article" date="1996" name="Appl. Environ. Microbiol.">
        <title>Aspergillus nidulans stcP encodes an O-methyltransferase that is required for sterigmatocystin biosynthesis.</title>
        <authorList>
            <person name="Kelkar H.S."/>
            <person name="Keller N.P."/>
            <person name="Adams T.H."/>
        </authorList>
    </citation>
    <scope>FUNCTION</scope>
</reference>
<reference key="8">
    <citation type="journal article" date="1996" name="Proc. Natl. Acad. Sci. U.S.A.">
        <title>Aspergillus has distinct fatty acid synthases for primary and secondary metabolism.</title>
        <authorList>
            <person name="Brown D.W."/>
            <person name="Adams T.H."/>
            <person name="Keller N.P."/>
        </authorList>
    </citation>
    <scope>FUNCTION</scope>
</reference>
<reference key="9">
    <citation type="journal article" date="1997" name="J. Biol. Chem.">
        <title>Aspergillus nidulans stcL encodes a putative cytochrome P-450 monooxygenase required for bisfuran desaturation during aflatoxin/sterigmatocystin biosynthesis.</title>
        <authorList>
            <person name="Kelkar H.S."/>
            <person name="Skloss T.W."/>
            <person name="Haw J.F."/>
            <person name="Keller N.P."/>
            <person name="Adams T.H."/>
        </authorList>
    </citation>
    <scope>FUNCTION</scope>
</reference>
<reference key="10">
    <citation type="journal article" date="1998" name="Mol. Microbiol.">
        <title>Sequence-specific binding by Aspergillus nidulans aflR, a C6 zinc cluster protein regulating mycotoxin biosynthesis.</title>
        <authorList>
            <person name="Fernandes M."/>
            <person name="Keller N.P."/>
            <person name="Adams T.H."/>
        </authorList>
    </citation>
    <scope>INDUCTION</scope>
</reference>
<reference key="11">
    <citation type="journal article" date="2000" name="Appl. Environ. Microbiol.">
        <title>Requirement of monooxygenase-mediated steps for sterigmatocystin biosynthesis by Aspergillus nidulans.</title>
        <authorList>
            <person name="Keller N.P."/>
            <person name="Watanabe C.M."/>
            <person name="Kelkar H.S."/>
            <person name="Adams T.H."/>
            <person name="Townsend C.A."/>
        </authorList>
    </citation>
    <scope>FUNCTION</scope>
</reference>
<reference key="12">
    <citation type="journal article" date="2012" name="Metabolites">
        <title>Genetics of polyketide metabolism in Aspergillus nidulans.</title>
        <authorList>
            <person name="Klejnstrup M.L."/>
            <person name="Frandsen R.J."/>
            <person name="Holm D.K."/>
            <person name="Nielsen M.T."/>
            <person name="Mortensen U.H."/>
            <person name="Larsen T.O."/>
            <person name="Nielsen J.B."/>
        </authorList>
    </citation>
    <scope>REVIEW ON STERIGMATOCYSTIN BIOSYNTHESIS</scope>
</reference>
<name>STCV_EMENI</name>
<evidence type="ECO:0000250" key="1">
    <source>
        <dbReference type="UniProtKB" id="O43488"/>
    </source>
</evidence>
<evidence type="ECO:0000250" key="2">
    <source>
        <dbReference type="UniProtKB" id="Q00258"/>
    </source>
</evidence>
<evidence type="ECO:0000250" key="3">
    <source>
        <dbReference type="UniProtKB" id="Q12053"/>
    </source>
</evidence>
<evidence type="ECO:0000250" key="4">
    <source>
        <dbReference type="UniProtKB" id="Q8CG76"/>
    </source>
</evidence>
<evidence type="ECO:0000269" key="5">
    <source>
    </source>
</evidence>
<evidence type="ECO:0000269" key="6">
    <source>
    </source>
</evidence>
<evidence type="ECO:0000269" key="7">
    <source>
    </source>
</evidence>
<evidence type="ECO:0000269" key="8">
    <source>
    </source>
</evidence>
<evidence type="ECO:0000269" key="9">
    <source>
    </source>
</evidence>
<evidence type="ECO:0000269" key="10">
    <source>
    </source>
</evidence>
<evidence type="ECO:0000269" key="11">
    <source>
    </source>
</evidence>
<evidence type="ECO:0000269" key="12">
    <source>
    </source>
</evidence>
<evidence type="ECO:0000303" key="13">
    <source>
    </source>
</evidence>
<evidence type="ECO:0000303" key="14">
    <source>
    </source>
</evidence>
<evidence type="ECO:0000305" key="15"/>
<evidence type="ECO:0000305" key="16">
    <source>
    </source>
</evidence>
<proteinExistence type="evidence at transcript level"/>
<protein>
    <recommendedName>
        <fullName evidence="2">Norsolorinic acid reductase stcV</fullName>
        <ecNumber evidence="2">1.1.1.-</ecNumber>
    </recommendedName>
    <alternativeName>
        <fullName evidence="14">Sterigmatocystin biosynthesis cluster protein V</fullName>
    </alternativeName>
</protein>
<organism>
    <name type="scientific">Emericella nidulans (strain FGSC A4 / ATCC 38163 / CBS 112.46 / NRRL 194 / M139)</name>
    <name type="common">Aspergillus nidulans</name>
    <dbReference type="NCBI Taxonomy" id="227321"/>
    <lineage>
        <taxon>Eukaryota</taxon>
        <taxon>Fungi</taxon>
        <taxon>Dikarya</taxon>
        <taxon>Ascomycota</taxon>
        <taxon>Pezizomycotina</taxon>
        <taxon>Eurotiomycetes</taxon>
        <taxon>Eurotiomycetidae</taxon>
        <taxon>Eurotiales</taxon>
        <taxon>Aspergillaceae</taxon>
        <taxon>Aspergillus</taxon>
        <taxon>Aspergillus subgen. Nidulantes</taxon>
    </lineage>
</organism>
<dbReference type="EC" id="1.1.1.-" evidence="2"/>
<dbReference type="EMBL" id="U34740">
    <property type="protein sequence ID" value="AAC49206.1"/>
    <property type="molecule type" value="Genomic_DNA"/>
</dbReference>
<dbReference type="EMBL" id="AACD01000132">
    <property type="protein sequence ID" value="EAA61593.1"/>
    <property type="molecule type" value="Genomic_DNA"/>
</dbReference>
<dbReference type="EMBL" id="BN001304">
    <property type="protein sequence ID" value="CBF80144.1"/>
    <property type="molecule type" value="Genomic_DNA"/>
</dbReference>
<dbReference type="RefSeq" id="XP_681074.1">
    <property type="nucleotide sequence ID" value="XM_675982.1"/>
</dbReference>
<dbReference type="SMR" id="Q00727"/>
<dbReference type="STRING" id="227321.Q00727"/>
<dbReference type="EnsemblFungi" id="CBF80144">
    <property type="protein sequence ID" value="CBF80144"/>
    <property type="gene ID" value="ANIA_07805"/>
</dbReference>
<dbReference type="KEGG" id="ani:ANIA_07805"/>
<dbReference type="VEuPathDB" id="FungiDB:AN7805"/>
<dbReference type="eggNOG" id="KOG1575">
    <property type="taxonomic scope" value="Eukaryota"/>
</dbReference>
<dbReference type="HOGENOM" id="CLU_023205_2_2_1"/>
<dbReference type="InParanoid" id="Q00727"/>
<dbReference type="OMA" id="HIELYQM"/>
<dbReference type="OrthoDB" id="48988at2759"/>
<dbReference type="UniPathway" id="UPA00377"/>
<dbReference type="Proteomes" id="UP000000560">
    <property type="component" value="Chromosome IV"/>
</dbReference>
<dbReference type="GO" id="GO:0016491">
    <property type="term" value="F:oxidoreductase activity"/>
    <property type="evidence" value="ECO:0007669"/>
    <property type="project" value="UniProtKB-KW"/>
</dbReference>
<dbReference type="GO" id="GO:0045461">
    <property type="term" value="P:sterigmatocystin biosynthetic process"/>
    <property type="evidence" value="ECO:0000270"/>
    <property type="project" value="AspGD"/>
</dbReference>
<dbReference type="CDD" id="cd19146">
    <property type="entry name" value="AKR_AKR9A1-2"/>
    <property type="match status" value="1"/>
</dbReference>
<dbReference type="FunFam" id="3.20.20.100:FF:000086">
    <property type="entry name" value="Putative sterigmatocystin biosynthesis dehydrogenase stcV"/>
    <property type="match status" value="1"/>
</dbReference>
<dbReference type="Gene3D" id="3.20.20.100">
    <property type="entry name" value="NADP-dependent oxidoreductase domain"/>
    <property type="match status" value="1"/>
</dbReference>
<dbReference type="InterPro" id="IPR050523">
    <property type="entry name" value="AKR_Detox_Biosynth"/>
</dbReference>
<dbReference type="InterPro" id="IPR023210">
    <property type="entry name" value="NADP_OxRdtase_dom"/>
</dbReference>
<dbReference type="InterPro" id="IPR036812">
    <property type="entry name" value="NADP_OxRdtase_dom_sf"/>
</dbReference>
<dbReference type="PANTHER" id="PTHR43364">
    <property type="entry name" value="NADH-SPECIFIC METHYLGLYOXAL REDUCTASE-RELATED"/>
    <property type="match status" value="1"/>
</dbReference>
<dbReference type="PANTHER" id="PTHR43364:SF7">
    <property type="entry name" value="NADP-DEPENDENT OXIDOREDUCTASE DOMAIN-CONTAINING PROTEIN-RELATED"/>
    <property type="match status" value="1"/>
</dbReference>
<dbReference type="Pfam" id="PF00248">
    <property type="entry name" value="Aldo_ket_red"/>
    <property type="match status" value="1"/>
</dbReference>
<dbReference type="SUPFAM" id="SSF51430">
    <property type="entry name" value="NAD(P)-linked oxidoreductase"/>
    <property type="match status" value="1"/>
</dbReference>
<accession>Q00727</accession>
<accession>C8VDS7</accession>
<accession>Q5AV75</accession>
<comment type="function">
    <text evidence="3 5 6 8 9 10 11 13 16">Norsolorinic acid reductase; part of the gene cluster that mediates the biosynthesis of sterigmatocystin (ST), a polyketide-derived furanocoumarin which is part of the most toxic and carcinogenic compounds among the known mycotoxins (PubMed:8643646). The first step in the biosynthesis of sterigmatocystin is the production of hexanoate by the fatty acid synthase (FAS) units stcJ and stcK (PubMed:8962148). The polyketide backbone is assembled by the non-reducing polyketide synthase stcA by condensation of the starter hexanoyl-CoA and 7 malonyl-CoA extender units followed by cyclization and release of norsolorinic acid (By similarity). Norsolorinic acid is the first stable intermediate in the biosynthesis of sterigmatocystin and is converted into averantin (AVN) by the ketoreductase stcE which reduces the hexanoate ketone to an alcohol (Probable) (PubMed:8643646). Averantin is then oxidized into 5'-hydroxyaverantin (HAVN) by the cytochrome P450 monooxygenase stcF (PubMed:10618248). 5'-hydroxyaverantin is further converted to 5'-oxyaverantin (OAVN) by the 5'-hydroxyaverantin dehydrogenase stcG (PubMed:24957370). The next step is the conversion of OAVN into averufin (AVF) which is catalyzed by a yet to be identified enzyme (PubMed:24957370). The cytochrome P450 monooxygenase stcB and the flavin-binding monooxygenase stcW are both required for the conversion of averufin to 1-hydroxyversicolorone (PubMed:10618248). The esterase stcI probably catalyzes the formation of versiconal hemiacetal acetate from 1-hydroxyversicolorone (PubMed:24957370). The oxydoreductase stcN then probably catalyzes the biosynthetic step from versiconal to versicolorin B (VERB) (PubMed:24957370). The next step is performed by the versicolorin B desaturase stcL to produce versicolorin A (VERA) (PubMed:8999832). The ketoreductase stcU and the cytochrome P450 monooxygenase stcS are involved in the conversion of versicolorin A to demethylsterigmatocystin (PubMed:7486998). The Baeyer-Villiger oxidas stcQ and the reductase stcR might be involved in the biosynthetic step from versicolorin A to demethylsterigmatocystin (PubMed:24957370). The final step in the biosynthesis of sterigmatocystin is the methylation of demethylsterigmatocystin catalyzed by the methyltransferase stcP (PubMed:8900026).</text>
</comment>
<comment type="pathway">
    <text evidence="8">Mycotoxin biosynthesis; sterigmatocystin biosynthesis.</text>
</comment>
<comment type="induction">
    <text evidence="7 8 12">The genes forming the sterigmatocystin biosynthesis cluster are co-regulated and induced on oatmeal porridge or the fungal isolates were grown either on oatmeal porridge or in YEC medium (0.2% yeast extract, 5.0% corn steep liquor) (PubMed:8017929, PubMed:8643646). Expression is positively regulated by the cluster-specific transcription factor aflR that binds the palindromic sequence 5'-TCG(N5)CGA-3'found in the promoter (PubMed:9680223).</text>
</comment>
<comment type="similarity">
    <text evidence="15">Belongs to the aldo/keto reductase family. Aldo/keto reductase 2 subfamily.</text>
</comment>
<gene>
    <name evidence="14" type="primary">stcV</name>
    <name type="ORF">AN7805</name>
</gene>
<keyword id="KW-0521">NADP</keyword>
<keyword id="KW-0560">Oxidoreductase</keyword>
<keyword id="KW-1185">Reference proteome</keyword>